<dbReference type="EMBL" id="Z37983">
    <property type="protein sequence ID" value="CAA86061.1"/>
    <property type="molecule type" value="Genomic_DNA"/>
</dbReference>
<dbReference type="PIR" id="T18742">
    <property type="entry name" value="T18742"/>
</dbReference>
<dbReference type="PDB" id="9BH5">
    <property type="method" value="EM"/>
    <property type="resolution" value="2.63 A"/>
    <property type="chains" value="AA=1-276"/>
</dbReference>
<dbReference type="PDB" id="9CAI">
    <property type="method" value="EM"/>
    <property type="resolution" value="2.59 A"/>
    <property type="chains" value="AA=1-276"/>
</dbReference>
<dbReference type="PDBsum" id="9BH5"/>
<dbReference type="PDBsum" id="9CAI"/>
<dbReference type="EMDB" id="EMD-44533"/>
<dbReference type="EMDB" id="EMD-45392"/>
<dbReference type="SMR" id="P46769"/>
<dbReference type="BioGRID" id="40862">
    <property type="interactions" value="105"/>
</dbReference>
<dbReference type="DIP" id="DIP-26217N"/>
<dbReference type="FunCoup" id="P46769">
    <property type="interactions" value="2017"/>
</dbReference>
<dbReference type="IntAct" id="P46769">
    <property type="interactions" value="4"/>
</dbReference>
<dbReference type="STRING" id="6239.B0393.1.2"/>
<dbReference type="iPTMnet" id="P46769"/>
<dbReference type="PaxDb" id="6239-B0393.1.1"/>
<dbReference type="PeptideAtlas" id="P46769"/>
<dbReference type="EnsemblMetazoa" id="B0393.1.1">
    <property type="protein sequence ID" value="B0393.1.1"/>
    <property type="gene ID" value="WBGene00004469"/>
</dbReference>
<dbReference type="KEGG" id="cel:CELE_B0393.1"/>
<dbReference type="UCSC" id="B0393.1.1">
    <property type="organism name" value="c. elegans"/>
</dbReference>
<dbReference type="AGR" id="WB:WBGene00004469"/>
<dbReference type="CTD" id="175628"/>
<dbReference type="WormBase" id="B0393.1">
    <property type="protein sequence ID" value="CE00854"/>
    <property type="gene ID" value="WBGene00004469"/>
    <property type="gene designation" value="rps-0"/>
</dbReference>
<dbReference type="eggNOG" id="KOG0830">
    <property type="taxonomic scope" value="Eukaryota"/>
</dbReference>
<dbReference type="GeneTree" id="ENSGT00950000183099"/>
<dbReference type="HOGENOM" id="CLU_058171_1_0_1"/>
<dbReference type="InParanoid" id="P46769"/>
<dbReference type="OMA" id="VKNFFEP"/>
<dbReference type="OrthoDB" id="414863at2759"/>
<dbReference type="PhylomeDB" id="P46769"/>
<dbReference type="Reactome" id="R-CEL-156827">
    <property type="pathway name" value="L13a-mediated translational silencing of Ceruloplasmin expression"/>
</dbReference>
<dbReference type="Reactome" id="R-CEL-1799339">
    <property type="pathway name" value="SRP-dependent cotranslational protein targeting to membrane"/>
</dbReference>
<dbReference type="Reactome" id="R-CEL-72649">
    <property type="pathway name" value="Translation initiation complex formation"/>
</dbReference>
<dbReference type="Reactome" id="R-CEL-72689">
    <property type="pathway name" value="Formation of a pool of free 40S subunits"/>
</dbReference>
<dbReference type="Reactome" id="R-CEL-72695">
    <property type="pathway name" value="Formation of the ternary complex, and subsequently, the 43S complex"/>
</dbReference>
<dbReference type="Reactome" id="R-CEL-72702">
    <property type="pathway name" value="Ribosomal scanning and start codon recognition"/>
</dbReference>
<dbReference type="Reactome" id="R-CEL-72706">
    <property type="pathway name" value="GTP hydrolysis and joining of the 60S ribosomal subunit"/>
</dbReference>
<dbReference type="Reactome" id="R-CEL-975956">
    <property type="pathway name" value="Nonsense Mediated Decay (NMD) independent of the Exon Junction Complex (EJC)"/>
</dbReference>
<dbReference type="Reactome" id="R-CEL-975957">
    <property type="pathway name" value="Nonsense Mediated Decay (NMD) enhanced by the Exon Junction Complex (EJC)"/>
</dbReference>
<dbReference type="PRO" id="PR:P46769"/>
<dbReference type="Proteomes" id="UP000001940">
    <property type="component" value="Chromosome III"/>
</dbReference>
<dbReference type="Bgee" id="WBGene00004469">
    <property type="expression patterns" value="Expressed in germ line (C elegans) and 4 other cell types or tissues"/>
</dbReference>
<dbReference type="GO" id="GO:0022627">
    <property type="term" value="C:cytosolic small ribosomal subunit"/>
    <property type="evidence" value="ECO:0000318"/>
    <property type="project" value="GO_Central"/>
</dbReference>
<dbReference type="GO" id="GO:0003735">
    <property type="term" value="F:structural constituent of ribosome"/>
    <property type="evidence" value="ECO:0000318"/>
    <property type="project" value="GO_Central"/>
</dbReference>
<dbReference type="GO" id="GO:0002181">
    <property type="term" value="P:cytoplasmic translation"/>
    <property type="evidence" value="ECO:0000318"/>
    <property type="project" value="GO_Central"/>
</dbReference>
<dbReference type="GO" id="GO:0000028">
    <property type="term" value="P:ribosomal small subunit assembly"/>
    <property type="evidence" value="ECO:0000318"/>
    <property type="project" value="GO_Central"/>
</dbReference>
<dbReference type="CDD" id="cd01425">
    <property type="entry name" value="RPS2"/>
    <property type="match status" value="1"/>
</dbReference>
<dbReference type="FunFam" id="3.40.50.10490:FF:000012">
    <property type="entry name" value="40S ribosomal protein SA"/>
    <property type="match status" value="1"/>
</dbReference>
<dbReference type="Gene3D" id="3.40.50.10490">
    <property type="entry name" value="Glucose-6-phosphate isomerase like protein, domain 1"/>
    <property type="match status" value="1"/>
</dbReference>
<dbReference type="HAMAP" id="MF_03015">
    <property type="entry name" value="Ribosomal_S2_euk"/>
    <property type="match status" value="1"/>
</dbReference>
<dbReference type="InterPro" id="IPR001865">
    <property type="entry name" value="Ribosomal_uS2"/>
</dbReference>
<dbReference type="InterPro" id="IPR018130">
    <property type="entry name" value="Ribosomal_uS2_CS"/>
</dbReference>
<dbReference type="InterPro" id="IPR027498">
    <property type="entry name" value="Ribosomal_uS2_euk"/>
</dbReference>
<dbReference type="InterPro" id="IPR005707">
    <property type="entry name" value="Ribosomal_uS2_euk/arc"/>
</dbReference>
<dbReference type="InterPro" id="IPR023591">
    <property type="entry name" value="Ribosomal_uS2_flav_dom_sf"/>
</dbReference>
<dbReference type="NCBIfam" id="TIGR01012">
    <property type="entry name" value="uS2_euk_arch"/>
    <property type="match status" value="1"/>
</dbReference>
<dbReference type="PANTHER" id="PTHR11489">
    <property type="entry name" value="40S RIBOSOMAL PROTEIN SA"/>
    <property type="match status" value="1"/>
</dbReference>
<dbReference type="Pfam" id="PF00318">
    <property type="entry name" value="Ribosomal_S2"/>
    <property type="match status" value="1"/>
</dbReference>
<dbReference type="PRINTS" id="PR00395">
    <property type="entry name" value="RIBOSOMALS2"/>
</dbReference>
<dbReference type="SUPFAM" id="SSF52313">
    <property type="entry name" value="Ribosomal protein S2"/>
    <property type="match status" value="1"/>
</dbReference>
<dbReference type="PROSITE" id="PS00962">
    <property type="entry name" value="RIBOSOMAL_S2_1"/>
    <property type="match status" value="1"/>
</dbReference>
<dbReference type="PROSITE" id="PS00963">
    <property type="entry name" value="RIBOSOMAL_S2_2"/>
    <property type="match status" value="1"/>
</dbReference>
<feature type="initiator methionine" description="Removed" evidence="1 4">
    <location>
        <position position="1"/>
    </location>
</feature>
<feature type="chain" id="PRO_0000134352" description="Small ribosomal subunit protein uS2">
    <location>
        <begin position="2"/>
        <end position="276"/>
    </location>
</feature>
<feature type="modified residue" description="N-acetylserine" evidence="1 4">
    <location>
        <position position="2"/>
    </location>
</feature>
<organism>
    <name type="scientific">Caenorhabditis elegans</name>
    <dbReference type="NCBI Taxonomy" id="6239"/>
    <lineage>
        <taxon>Eukaryota</taxon>
        <taxon>Metazoa</taxon>
        <taxon>Ecdysozoa</taxon>
        <taxon>Nematoda</taxon>
        <taxon>Chromadorea</taxon>
        <taxon>Rhabditida</taxon>
        <taxon>Rhabditina</taxon>
        <taxon>Rhabditomorpha</taxon>
        <taxon>Rhabditoidea</taxon>
        <taxon>Rhabditidae</taxon>
        <taxon>Peloderinae</taxon>
        <taxon>Caenorhabditis</taxon>
    </lineage>
</organism>
<evidence type="ECO:0000255" key="1">
    <source>
        <dbReference type="HAMAP-Rule" id="MF_03015"/>
    </source>
</evidence>
<evidence type="ECO:0000269" key="2">
    <source>
    </source>
</evidence>
<evidence type="ECO:0000269" key="3">
    <source>
    </source>
</evidence>
<evidence type="ECO:0000269" key="4">
    <source ref="2"/>
</evidence>
<evidence type="ECO:0000305" key="5"/>
<name>RSSA_CAEEL</name>
<gene>
    <name evidence="1" type="primary">rps-0</name>
    <name type="ORF">B0393.1</name>
</gene>
<keyword id="KW-0002">3D-structure</keyword>
<keyword id="KW-0007">Acetylation</keyword>
<keyword id="KW-0963">Cytoplasm</keyword>
<keyword id="KW-0903">Direct protein sequencing</keyword>
<keyword id="KW-1185">Reference proteome</keyword>
<keyword id="KW-0687">Ribonucleoprotein</keyword>
<keyword id="KW-0689">Ribosomal protein</keyword>
<proteinExistence type="evidence at protein level"/>
<sequence length="276" mass="30703">MSGGAAHSALTEEDVMKLLATQAHLGSTNLNFQMQQYVYKRRFDGPNIINVKKTWEKLLLAARAIAAVENPADVVVVSARPYAQRALLKFAAHTGATAIFGRFSPGCLTNQIQKTFKEPRLLVISDPRIDHQAVTEASYVGVPVISFVNTESPLKLIDIGVPCNNKGERSIGLMWWMLAREILILRGKISRQTGFVLEGKEIMPDLYFYRDPTETEKEETGAHADVAEAQEYQQPTDIDFTTQGGKVDDWAAETATWTAETKTTEEWANAPTQSNW</sequence>
<protein>
    <recommendedName>
        <fullName evidence="1">Small ribosomal subunit protein uS2</fullName>
    </recommendedName>
    <alternativeName>
        <fullName evidence="5">40S ribosomal protein SA</fullName>
    </alternativeName>
</protein>
<reference key="1">
    <citation type="journal article" date="1998" name="Science">
        <title>Genome sequence of the nematode C. elegans: a platform for investigating biology.</title>
        <authorList>
            <consortium name="The C. elegans sequencing consortium"/>
        </authorList>
    </citation>
    <scope>NUCLEOTIDE SEQUENCE [LARGE SCALE GENOMIC DNA]</scope>
    <source>
        <strain>Bristol N2</strain>
    </source>
</reference>
<reference key="2">
    <citation type="submission" date="2005-08" db="UniProtKB">
        <authorList>
            <person name="Bienvenut W.V."/>
        </authorList>
    </citation>
    <scope>PROTEIN SEQUENCE OF 2-17; 42-52; 64-80; 129-155; 170-180 AND 192-200</scope>
    <scope>IDENTIFICATION BY MASS SPECTROMETRY</scope>
    <scope>ACETYLATION AT SER-2</scope>
</reference>
<reference key="3">
    <citation type="journal article" date="2005" name="Proteomics">
        <title>Proteomic analysis of protein expression profiles during Caenorhabditis elegans development using two-dimensional difference gel electrophoresis.</title>
        <authorList>
            <person name="Tabuse Y."/>
            <person name="Nabetani T."/>
            <person name="Tsugita A."/>
        </authorList>
    </citation>
    <scope>IDENTIFICATION BY MASS SPECTROMETRY</scope>
    <scope>DEVELOPMENTAL STAGE</scope>
</reference>
<reference key="4">
    <citation type="journal article" date="2023" name="PLoS Genet.">
        <title>A ZTF-7/RPS-2 complex mediates the cold-warm response in C. elegans.</title>
        <authorList>
            <person name="Xu T."/>
            <person name="Liao S."/>
            <person name="Huang M."/>
            <person name="Zhu C."/>
            <person name="Huang X."/>
            <person name="Jin Q."/>
            <person name="Xu D."/>
            <person name="Fu C."/>
            <person name="Chen X."/>
            <person name="Feng X."/>
            <person name="Guang S."/>
        </authorList>
    </citation>
    <scope>FUNCTION</scope>
</reference>
<accession>P46769</accession>
<comment type="function">
    <text evidence="1 3">Required for the assembly and/or stability of the 40S ribosomal subunit. Required for the processing of the 20S rRNA-precursor to mature 18S rRNA in a late step of the maturation of 40S ribosomal subunits. Involved in cold-warm shock-induced translocation of the RNA exosome components from the nucleolus to nucleoplasm (PubMed:36763670).</text>
</comment>
<comment type="subunit">
    <text evidence="1">Component of the small ribosomal subunit. Mature ribosomes consist of a small (40S) and a large (60S) subunit. The 40S subunit contains about 33 different proteins and 1 molecule of RNA (18S). The 60S subunit contains about 49 different proteins and 3 molecules of RNA (28S, 5.8S and 5S). Interacts with rps-21.</text>
</comment>
<comment type="interaction">
    <interactant intactId="EBI-313262">
        <id>P46769</id>
    </interactant>
    <interactant intactId="EBI-313268">
        <id>P49197</id>
        <label>rps-21</label>
    </interactant>
    <organismsDiffer>false</organismsDiffer>
    <experiments>4</experiments>
</comment>
<comment type="subcellular location">
    <subcellularLocation>
        <location>Cytoplasm</location>
    </subcellularLocation>
</comment>
<comment type="developmental stage">
    <text evidence="2">Expressed at a stable level throughout development.</text>
</comment>
<comment type="similarity">
    <text evidence="1">Belongs to the universal ribosomal protein uS2 family.</text>
</comment>